<feature type="chain" id="PRO_0000336732" description="Probable nicotinate-nucleotide adenylyltransferase">
    <location>
        <begin position="1"/>
        <end position="220"/>
    </location>
</feature>
<dbReference type="EC" id="2.7.7.18" evidence="1"/>
<dbReference type="EMBL" id="CP000282">
    <property type="protein sequence ID" value="ABD82599.1"/>
    <property type="molecule type" value="Genomic_DNA"/>
</dbReference>
<dbReference type="RefSeq" id="WP_011469815.1">
    <property type="nucleotide sequence ID" value="NC_007912.1"/>
</dbReference>
<dbReference type="SMR" id="Q21FD0"/>
<dbReference type="STRING" id="203122.Sde_3344"/>
<dbReference type="GeneID" id="98614964"/>
<dbReference type="KEGG" id="sde:Sde_3344"/>
<dbReference type="eggNOG" id="COG1057">
    <property type="taxonomic scope" value="Bacteria"/>
</dbReference>
<dbReference type="HOGENOM" id="CLU_069765_0_0_6"/>
<dbReference type="OrthoDB" id="5295945at2"/>
<dbReference type="UniPathway" id="UPA00253">
    <property type="reaction ID" value="UER00332"/>
</dbReference>
<dbReference type="Proteomes" id="UP000001947">
    <property type="component" value="Chromosome"/>
</dbReference>
<dbReference type="GO" id="GO:0005524">
    <property type="term" value="F:ATP binding"/>
    <property type="evidence" value="ECO:0007669"/>
    <property type="project" value="UniProtKB-KW"/>
</dbReference>
<dbReference type="GO" id="GO:0004515">
    <property type="term" value="F:nicotinate-nucleotide adenylyltransferase activity"/>
    <property type="evidence" value="ECO:0007669"/>
    <property type="project" value="UniProtKB-UniRule"/>
</dbReference>
<dbReference type="GO" id="GO:0009435">
    <property type="term" value="P:NAD biosynthetic process"/>
    <property type="evidence" value="ECO:0007669"/>
    <property type="project" value="UniProtKB-UniRule"/>
</dbReference>
<dbReference type="CDD" id="cd02165">
    <property type="entry name" value="NMNAT"/>
    <property type="match status" value="1"/>
</dbReference>
<dbReference type="Gene3D" id="3.40.50.620">
    <property type="entry name" value="HUPs"/>
    <property type="match status" value="1"/>
</dbReference>
<dbReference type="HAMAP" id="MF_00244">
    <property type="entry name" value="NaMN_adenylyltr"/>
    <property type="match status" value="1"/>
</dbReference>
<dbReference type="InterPro" id="IPR004821">
    <property type="entry name" value="Cyt_trans-like"/>
</dbReference>
<dbReference type="InterPro" id="IPR005248">
    <property type="entry name" value="NadD/NMNAT"/>
</dbReference>
<dbReference type="InterPro" id="IPR014729">
    <property type="entry name" value="Rossmann-like_a/b/a_fold"/>
</dbReference>
<dbReference type="NCBIfam" id="TIGR00125">
    <property type="entry name" value="cyt_tran_rel"/>
    <property type="match status" value="1"/>
</dbReference>
<dbReference type="NCBIfam" id="TIGR00482">
    <property type="entry name" value="nicotinate (nicotinamide) nucleotide adenylyltransferase"/>
    <property type="match status" value="1"/>
</dbReference>
<dbReference type="NCBIfam" id="NF000839">
    <property type="entry name" value="PRK00071.1-1"/>
    <property type="match status" value="1"/>
</dbReference>
<dbReference type="PANTHER" id="PTHR39321">
    <property type="entry name" value="NICOTINATE-NUCLEOTIDE ADENYLYLTRANSFERASE-RELATED"/>
    <property type="match status" value="1"/>
</dbReference>
<dbReference type="PANTHER" id="PTHR39321:SF3">
    <property type="entry name" value="PHOSPHOPANTETHEINE ADENYLYLTRANSFERASE"/>
    <property type="match status" value="1"/>
</dbReference>
<dbReference type="Pfam" id="PF01467">
    <property type="entry name" value="CTP_transf_like"/>
    <property type="match status" value="1"/>
</dbReference>
<dbReference type="SUPFAM" id="SSF52374">
    <property type="entry name" value="Nucleotidylyl transferase"/>
    <property type="match status" value="1"/>
</dbReference>
<reference key="1">
    <citation type="journal article" date="2008" name="PLoS Genet.">
        <title>Complete genome sequence of the complex carbohydrate-degrading marine bacterium, Saccharophagus degradans strain 2-40 T.</title>
        <authorList>
            <person name="Weiner R.M."/>
            <person name="Taylor L.E. II"/>
            <person name="Henrissat B."/>
            <person name="Hauser L."/>
            <person name="Land M."/>
            <person name="Coutinho P.M."/>
            <person name="Rancurel C."/>
            <person name="Saunders E.H."/>
            <person name="Longmire A.G."/>
            <person name="Zhang H."/>
            <person name="Bayer E.A."/>
            <person name="Gilbert H.J."/>
            <person name="Larimer F."/>
            <person name="Zhulin I.B."/>
            <person name="Ekborg N.A."/>
            <person name="Lamed R."/>
            <person name="Richardson P.M."/>
            <person name="Borovok I."/>
            <person name="Hutcheson S."/>
        </authorList>
    </citation>
    <scope>NUCLEOTIDE SEQUENCE [LARGE SCALE GENOMIC DNA]</scope>
    <source>
        <strain>2-40 / ATCC 43961 / DSM 17024</strain>
    </source>
</reference>
<protein>
    <recommendedName>
        <fullName evidence="1">Probable nicotinate-nucleotide adenylyltransferase</fullName>
        <ecNumber evidence="1">2.7.7.18</ecNumber>
    </recommendedName>
    <alternativeName>
        <fullName evidence="1">Deamido-NAD(+) diphosphorylase</fullName>
    </alternativeName>
    <alternativeName>
        <fullName evidence="1">Deamido-NAD(+) pyrophosphorylase</fullName>
    </alternativeName>
    <alternativeName>
        <fullName evidence="1">Nicotinate mononucleotide adenylyltransferase</fullName>
        <shortName evidence="1">NaMN adenylyltransferase</shortName>
    </alternativeName>
</protein>
<keyword id="KW-0067">ATP-binding</keyword>
<keyword id="KW-0520">NAD</keyword>
<keyword id="KW-0547">Nucleotide-binding</keyword>
<keyword id="KW-0548">Nucleotidyltransferase</keyword>
<keyword id="KW-0662">Pyridine nucleotide biosynthesis</keyword>
<keyword id="KW-1185">Reference proteome</keyword>
<keyword id="KW-0808">Transferase</keyword>
<organism>
    <name type="scientific">Saccharophagus degradans (strain 2-40 / ATCC 43961 / DSM 17024)</name>
    <dbReference type="NCBI Taxonomy" id="203122"/>
    <lineage>
        <taxon>Bacteria</taxon>
        <taxon>Pseudomonadati</taxon>
        <taxon>Pseudomonadota</taxon>
        <taxon>Gammaproteobacteria</taxon>
        <taxon>Cellvibrionales</taxon>
        <taxon>Cellvibrionaceae</taxon>
        <taxon>Saccharophagus</taxon>
    </lineage>
</organism>
<sequence length="220" mass="24416">MGKAHATPQLLFGGTFNPVHNGHLVSAMAAREALGVDSVTLLPCYVPPHKTAPTIAAEHRLAMLQHVVQENNHLCIDTCELDAGESIFTVDTLAAKRELWGASASIIWLIGWDSLHNLSRWHRWQSLLTFANLAVVERPFAQSDDINSLPPAVRNWLQQHRVSAKQLTQQANGGVALLHTPRIELSSSDVRQRLGAQKSIQYMVPACVETYIRAHKLYTH</sequence>
<comment type="function">
    <text evidence="1">Catalyzes the reversible adenylation of nicotinate mononucleotide (NaMN) to nicotinic acid adenine dinucleotide (NaAD).</text>
</comment>
<comment type="catalytic activity">
    <reaction evidence="1">
        <text>nicotinate beta-D-ribonucleotide + ATP + H(+) = deamido-NAD(+) + diphosphate</text>
        <dbReference type="Rhea" id="RHEA:22860"/>
        <dbReference type="ChEBI" id="CHEBI:15378"/>
        <dbReference type="ChEBI" id="CHEBI:30616"/>
        <dbReference type="ChEBI" id="CHEBI:33019"/>
        <dbReference type="ChEBI" id="CHEBI:57502"/>
        <dbReference type="ChEBI" id="CHEBI:58437"/>
        <dbReference type="EC" id="2.7.7.18"/>
    </reaction>
</comment>
<comment type="pathway">
    <text evidence="1">Cofactor biosynthesis; NAD(+) biosynthesis; deamido-NAD(+) from nicotinate D-ribonucleotide: step 1/1.</text>
</comment>
<comment type="similarity">
    <text evidence="1">Belongs to the NadD family.</text>
</comment>
<name>NADD_SACD2</name>
<accession>Q21FD0</accession>
<evidence type="ECO:0000255" key="1">
    <source>
        <dbReference type="HAMAP-Rule" id="MF_00244"/>
    </source>
</evidence>
<proteinExistence type="inferred from homology"/>
<gene>
    <name evidence="1" type="primary">nadD</name>
    <name type="ordered locus">Sde_3344</name>
</gene>